<gene>
    <name evidence="1" type="primary">pcp</name>
    <name type="ordered locus">MGAS2096_Spy0436</name>
</gene>
<organism>
    <name type="scientific">Streptococcus pyogenes serotype M12 (strain MGAS2096)</name>
    <dbReference type="NCBI Taxonomy" id="370553"/>
    <lineage>
        <taxon>Bacteria</taxon>
        <taxon>Bacillati</taxon>
        <taxon>Bacillota</taxon>
        <taxon>Bacilli</taxon>
        <taxon>Lactobacillales</taxon>
        <taxon>Streptococcaceae</taxon>
        <taxon>Streptococcus</taxon>
    </lineage>
</organism>
<dbReference type="EC" id="3.4.19.3" evidence="1"/>
<dbReference type="EMBL" id="CP000261">
    <property type="protein sequence ID" value="ABF35488.1"/>
    <property type="molecule type" value="Genomic_DNA"/>
</dbReference>
<dbReference type="SMR" id="Q1JD20"/>
<dbReference type="MEROPS" id="C15.001"/>
<dbReference type="KEGG" id="spj:MGAS2096_Spy0436"/>
<dbReference type="HOGENOM" id="CLU_043960_4_0_9"/>
<dbReference type="GO" id="GO:0005829">
    <property type="term" value="C:cytosol"/>
    <property type="evidence" value="ECO:0007669"/>
    <property type="project" value="InterPro"/>
</dbReference>
<dbReference type="GO" id="GO:0016920">
    <property type="term" value="F:pyroglutamyl-peptidase activity"/>
    <property type="evidence" value="ECO:0007669"/>
    <property type="project" value="UniProtKB-UniRule"/>
</dbReference>
<dbReference type="GO" id="GO:0006508">
    <property type="term" value="P:proteolysis"/>
    <property type="evidence" value="ECO:0007669"/>
    <property type="project" value="UniProtKB-KW"/>
</dbReference>
<dbReference type="CDD" id="cd00501">
    <property type="entry name" value="Peptidase_C15"/>
    <property type="match status" value="1"/>
</dbReference>
<dbReference type="FunFam" id="3.40.630.20:FF:000001">
    <property type="entry name" value="Pyrrolidone-carboxylate peptidase"/>
    <property type="match status" value="1"/>
</dbReference>
<dbReference type="Gene3D" id="3.40.630.20">
    <property type="entry name" value="Peptidase C15, pyroglutamyl peptidase I-like"/>
    <property type="match status" value="1"/>
</dbReference>
<dbReference type="HAMAP" id="MF_00417">
    <property type="entry name" value="Pyrrolid_peptidase"/>
    <property type="match status" value="1"/>
</dbReference>
<dbReference type="InterPro" id="IPR000816">
    <property type="entry name" value="Peptidase_C15"/>
</dbReference>
<dbReference type="InterPro" id="IPR016125">
    <property type="entry name" value="Peptidase_C15-like"/>
</dbReference>
<dbReference type="InterPro" id="IPR036440">
    <property type="entry name" value="Peptidase_C15-like_sf"/>
</dbReference>
<dbReference type="InterPro" id="IPR029762">
    <property type="entry name" value="PGP-I_bact-type"/>
</dbReference>
<dbReference type="InterPro" id="IPR033694">
    <property type="entry name" value="PGPEP1_Cys_AS"/>
</dbReference>
<dbReference type="InterPro" id="IPR033693">
    <property type="entry name" value="PGPEP1_Glu_AS"/>
</dbReference>
<dbReference type="NCBIfam" id="NF009676">
    <property type="entry name" value="PRK13197.1"/>
    <property type="match status" value="1"/>
</dbReference>
<dbReference type="NCBIfam" id="TIGR00504">
    <property type="entry name" value="pyro_pdase"/>
    <property type="match status" value="1"/>
</dbReference>
<dbReference type="PANTHER" id="PTHR23402">
    <property type="entry name" value="PROTEASE FAMILY C15 PYROGLUTAMYL-PEPTIDASE I-RELATED"/>
    <property type="match status" value="1"/>
</dbReference>
<dbReference type="PANTHER" id="PTHR23402:SF1">
    <property type="entry name" value="PYROGLUTAMYL-PEPTIDASE I"/>
    <property type="match status" value="1"/>
</dbReference>
<dbReference type="Pfam" id="PF01470">
    <property type="entry name" value="Peptidase_C15"/>
    <property type="match status" value="1"/>
</dbReference>
<dbReference type="PIRSF" id="PIRSF015592">
    <property type="entry name" value="Prld-crbxl_pptds"/>
    <property type="match status" value="1"/>
</dbReference>
<dbReference type="PRINTS" id="PR00706">
    <property type="entry name" value="PYROGLUPTASE"/>
</dbReference>
<dbReference type="SUPFAM" id="SSF53182">
    <property type="entry name" value="Pyrrolidone carboxyl peptidase (pyroglutamate aminopeptidase)"/>
    <property type="match status" value="1"/>
</dbReference>
<dbReference type="PROSITE" id="PS01334">
    <property type="entry name" value="PYRASE_CYS"/>
    <property type="match status" value="1"/>
</dbReference>
<dbReference type="PROSITE" id="PS01333">
    <property type="entry name" value="PYRASE_GLU"/>
    <property type="match status" value="1"/>
</dbReference>
<accession>Q1JD20</accession>
<comment type="function">
    <text evidence="1">Removes 5-oxoproline from various penultimate amino acid residues except L-proline.</text>
</comment>
<comment type="catalytic activity">
    <reaction evidence="1">
        <text>Release of an N-terminal pyroglutamyl group from a polypeptide, the second amino acid generally not being Pro.</text>
        <dbReference type="EC" id="3.4.19.3"/>
    </reaction>
</comment>
<comment type="subunit">
    <text evidence="1">Homotetramer.</text>
</comment>
<comment type="subcellular location">
    <subcellularLocation>
        <location evidence="1">Cytoplasm</location>
    </subcellularLocation>
</comment>
<comment type="similarity">
    <text evidence="1">Belongs to the peptidase C15 family.</text>
</comment>
<keyword id="KW-0963">Cytoplasm</keyword>
<keyword id="KW-0378">Hydrolase</keyword>
<keyword id="KW-0645">Protease</keyword>
<keyword id="KW-0788">Thiol protease</keyword>
<evidence type="ECO:0000255" key="1">
    <source>
        <dbReference type="HAMAP-Rule" id="MF_00417"/>
    </source>
</evidence>
<proteinExistence type="inferred from homology"/>
<reference key="1">
    <citation type="journal article" date="2006" name="Proc. Natl. Acad. Sci. U.S.A.">
        <title>Molecular genetic anatomy of inter- and intraserotype variation in the human bacterial pathogen group A Streptococcus.</title>
        <authorList>
            <person name="Beres S.B."/>
            <person name="Richter E.W."/>
            <person name="Nagiec M.J."/>
            <person name="Sumby P."/>
            <person name="Porcella S.F."/>
            <person name="DeLeo F.R."/>
            <person name="Musser J.M."/>
        </authorList>
    </citation>
    <scope>NUCLEOTIDE SEQUENCE [LARGE SCALE GENOMIC DNA]</scope>
    <source>
        <strain>MGAS2096</strain>
    </source>
</reference>
<protein>
    <recommendedName>
        <fullName evidence="1">Pyrrolidone-carboxylate peptidase</fullName>
        <ecNumber evidence="1">3.4.19.3</ecNumber>
    </recommendedName>
    <alternativeName>
        <fullName evidence="1">5-oxoprolyl-peptidase</fullName>
    </alternativeName>
    <alternativeName>
        <fullName evidence="1">Pyroglutamyl-peptidase I</fullName>
        <shortName evidence="1">PGP-I</shortName>
        <shortName evidence="1">Pyrase</shortName>
    </alternativeName>
</protein>
<name>PCP_STRPB</name>
<sequence>MKILVTGFDPFGGEAINPALEAIKKLPATIHGAEIKYIEVPTVFQKSADVLQQHIESFQPDAVLCIGQAGGRTGLTPERVAINQDDARIPDNEGNQPIDTPIRADGKAAYFSTLPIKAMVAAIHQAGLPASVSNTAGTFVCNHLMYQALYLVDKYCPNAKAGFMHIPFMMEQVVDKPNTAAMNLDDITRGIEAAIFAIVDFKDRSDLKRVGGATH</sequence>
<feature type="chain" id="PRO_1000050144" description="Pyrrolidone-carboxylate peptidase">
    <location>
        <begin position="1"/>
        <end position="215"/>
    </location>
</feature>
<feature type="active site" evidence="1">
    <location>
        <position position="78"/>
    </location>
</feature>
<feature type="active site" evidence="1">
    <location>
        <position position="141"/>
    </location>
</feature>
<feature type="active site" evidence="1">
    <location>
        <position position="165"/>
    </location>
</feature>